<sequence>MGDLPTSQQALKVASSGRVILETGHPLPELGADEVLVRVACVALNPYDAKSVDMSPSPGATAGLDFAGEIVALGEAVNSSTRLAVGKRVCGFVFGNNPDRRDNGAFAEYVAVPASLVLCIPDSMTFLEAATLPCGLATTGTALYNSHNLGLPLLRPGSEVNSSNKSSTYVLVYGGGTATATIIIQVLRRSGFIPITTSSPHNFNRLQQLGAEATFDYHSPTCGSDLRDYTHNRLAFAIDCISSTDSMQICYEAIGTAGGRYVSLDPFPLNKHTRRSIRPVWLFSFTIFGSAIKWDTPYNFPARPDDRESAERWYAEIEAILATGELVTHPFQEETGGLSSVIDGIGAVRNGQITGYKLVYPIRNCAY</sequence>
<gene>
    <name evidence="3" type="primary">opdC</name>
    <name type="ORF">PDE_01238</name>
</gene>
<comment type="function">
    <text evidence="2">Trans-enoyl reductase; part of the gene cluster that mediates the biosynthesis of oxopyrrolidines, polyketide-amino acid hybrid compounds with feature structures of tetramic acid (PubMed:36005526). The polyketide chain is first assembled by the highly reducing PKS module of opdA using acetyl-CoA as the starter unit and five malonyl-CoA as the extender units (PubMed:36005526). OpdC acts as a trans-acting enoyl reductase and reduces the terminal alkenyl to alkane (PubMed:36005526). The 17R in oxopyrrolidine A and 15R, 17S in oxopyrrolidine B are generated by non-stereospecific catalysis of the ketoreductase (KR) domain and enoyl reductases (PubMed:36005526). Then the polyketides with specific configurations are transferred to the NRPS module of opdA and linked to L-tyrosine to form an amide bond (PubMed:36005526). Finally, the oxopyrrolidines are offloaded through a Dieckmann cyclization catalyzed by the terminal D domain to give a tetramic acid moiety (PubMed:36005526).</text>
</comment>
<comment type="pathway">
    <text evidence="2">Secondary metabolite biosynthesis.</text>
</comment>
<comment type="subunit">
    <text evidence="1">Monomer.</text>
</comment>
<comment type="disruption phenotype">
    <text evidence="2">Impairs the production of oxopyrrolidines A and B.</text>
</comment>
<comment type="similarity">
    <text evidence="4">Belongs to the zinc-containing alcohol dehydrogenase family.</text>
</comment>
<evidence type="ECO:0000250" key="1">
    <source>
        <dbReference type="UniProtKB" id="Q9Y7D0"/>
    </source>
</evidence>
<evidence type="ECO:0000269" key="2">
    <source>
    </source>
</evidence>
<evidence type="ECO:0000303" key="3">
    <source>
    </source>
</evidence>
<evidence type="ECO:0000305" key="4"/>
<evidence type="ECO:0000305" key="5">
    <source>
    </source>
</evidence>
<organism>
    <name type="scientific">Penicillium oxalicum (strain 114-2 / CGMCC 5302)</name>
    <name type="common">Penicillium decumbens</name>
    <dbReference type="NCBI Taxonomy" id="933388"/>
    <lineage>
        <taxon>Eukaryota</taxon>
        <taxon>Fungi</taxon>
        <taxon>Dikarya</taxon>
        <taxon>Ascomycota</taxon>
        <taxon>Pezizomycotina</taxon>
        <taxon>Eurotiomycetes</taxon>
        <taxon>Eurotiomycetidae</taxon>
        <taxon>Eurotiales</taxon>
        <taxon>Aspergillaceae</taxon>
        <taxon>Penicillium</taxon>
    </lineage>
</organism>
<feature type="chain" id="PRO_0000457069" description="Trans-enoyl reductase opdC">
    <location>
        <begin position="1"/>
        <end position="367"/>
    </location>
</feature>
<feature type="binding site" evidence="1">
    <location>
        <begin position="47"/>
        <end position="50"/>
    </location>
    <ligand>
        <name>NADP(+)</name>
        <dbReference type="ChEBI" id="CHEBI:58349"/>
    </ligand>
</feature>
<feature type="binding site" evidence="1">
    <location>
        <begin position="199"/>
        <end position="202"/>
    </location>
    <ligand>
        <name>NADP(+)</name>
        <dbReference type="ChEBI" id="CHEBI:58349"/>
    </ligand>
</feature>
<feature type="binding site" evidence="1">
    <location>
        <position position="217"/>
    </location>
    <ligand>
        <name>NADP(+)</name>
        <dbReference type="ChEBI" id="CHEBI:58349"/>
    </ligand>
</feature>
<feature type="binding site" evidence="1">
    <location>
        <begin position="264"/>
        <end position="265"/>
    </location>
    <ligand>
        <name>NADP(+)</name>
        <dbReference type="ChEBI" id="CHEBI:58349"/>
    </ligand>
</feature>
<feature type="binding site" evidence="1">
    <location>
        <begin position="353"/>
        <end position="354"/>
    </location>
    <ligand>
        <name>NADP(+)</name>
        <dbReference type="ChEBI" id="CHEBI:58349"/>
    </ligand>
</feature>
<keyword id="KW-0521">NADP</keyword>
<keyword id="KW-0547">Nucleotide-binding</keyword>
<keyword id="KW-0560">Oxidoreductase</keyword>
<keyword id="KW-1185">Reference proteome</keyword>
<reference key="1">
    <citation type="journal article" date="2013" name="PLoS ONE">
        <title>Genomic and secretomic analyses reveal unique features of the lignocellulolytic enzyme system of Penicillium decumbens.</title>
        <authorList>
            <person name="Liu G."/>
            <person name="Zhang L."/>
            <person name="Wei X."/>
            <person name="Zou G."/>
            <person name="Qin Y."/>
            <person name="Ma L."/>
            <person name="Li J."/>
            <person name="Zheng H."/>
            <person name="Wang S."/>
            <person name="Wang C."/>
            <person name="Xun L."/>
            <person name="Zhao G.-P."/>
            <person name="Zhou Z."/>
            <person name="Qu Y."/>
        </authorList>
    </citation>
    <scope>NUCLEOTIDE SEQUENCE [LARGE SCALE GENOMIC DNA]</scope>
    <source>
        <strain>114-2 / CGMCC 5302</strain>
    </source>
</reference>
<reference key="2">
    <citation type="journal article" date="2022" name="Mar. Drugs">
        <title>Identification of PKS-NRPS Hybrid Metabolites in Marine-Derived Penicillium oxalicum.</title>
        <authorList>
            <person name="Li H."/>
            <person name="Zhang W."/>
            <person name="Zhang X."/>
            <person name="Tang S."/>
            <person name="Men P."/>
            <person name="Xiong M."/>
            <person name="Li Z."/>
            <person name="Zhang Y."/>
            <person name="Huang X."/>
            <person name="Lu X."/>
        </authorList>
    </citation>
    <scope>FUNCTION</scope>
    <scope>DISRUPTION PHENOTYPE</scope>
    <scope>PATHWAY</scope>
</reference>
<name>OPDC_PENO1</name>
<proteinExistence type="inferred from homology"/>
<protein>
    <recommendedName>
        <fullName evidence="3">Trans-enoyl reductase opdC</fullName>
        <ecNumber evidence="5">1.-.-.-</ecNumber>
    </recommendedName>
    <alternativeName>
        <fullName evidence="3">Oxopyrrolidines biosynthesis cluster protein C</fullName>
    </alternativeName>
</protein>
<accession>S8AWP5</accession>
<dbReference type="EC" id="1.-.-.-" evidence="5"/>
<dbReference type="EMBL" id="KB644408">
    <property type="protein sequence ID" value="EPS26302.1"/>
    <property type="molecule type" value="Genomic_DNA"/>
</dbReference>
<dbReference type="SMR" id="S8AWP5"/>
<dbReference type="STRING" id="933388.S8AWP5"/>
<dbReference type="eggNOG" id="KOG1198">
    <property type="taxonomic scope" value="Eukaryota"/>
</dbReference>
<dbReference type="HOGENOM" id="CLU_026673_16_1_1"/>
<dbReference type="OrthoDB" id="48317at2759"/>
<dbReference type="PhylomeDB" id="S8AWP5"/>
<dbReference type="Proteomes" id="UP000019376">
    <property type="component" value="Unassembled WGS sequence"/>
</dbReference>
<dbReference type="GO" id="GO:0000166">
    <property type="term" value="F:nucleotide binding"/>
    <property type="evidence" value="ECO:0007669"/>
    <property type="project" value="UniProtKB-KW"/>
</dbReference>
<dbReference type="GO" id="GO:0016651">
    <property type="term" value="F:oxidoreductase activity, acting on NAD(P)H"/>
    <property type="evidence" value="ECO:0007669"/>
    <property type="project" value="InterPro"/>
</dbReference>
<dbReference type="CDD" id="cd08249">
    <property type="entry name" value="enoyl_reductase_like"/>
    <property type="match status" value="1"/>
</dbReference>
<dbReference type="Gene3D" id="3.90.180.10">
    <property type="entry name" value="Medium-chain alcohol dehydrogenases, catalytic domain"/>
    <property type="match status" value="1"/>
</dbReference>
<dbReference type="Gene3D" id="3.40.50.720">
    <property type="entry name" value="NAD(P)-binding Rossmann-like Domain"/>
    <property type="match status" value="1"/>
</dbReference>
<dbReference type="InterPro" id="IPR013154">
    <property type="entry name" value="ADH-like_N"/>
</dbReference>
<dbReference type="InterPro" id="IPR011032">
    <property type="entry name" value="GroES-like_sf"/>
</dbReference>
<dbReference type="InterPro" id="IPR036291">
    <property type="entry name" value="NAD(P)-bd_dom_sf"/>
</dbReference>
<dbReference type="InterPro" id="IPR020843">
    <property type="entry name" value="PKS_ER"/>
</dbReference>
<dbReference type="InterPro" id="IPR047122">
    <property type="entry name" value="Trans-enoyl_RdTase-like"/>
</dbReference>
<dbReference type="PANTHER" id="PTHR45348">
    <property type="entry name" value="HYPOTHETICAL OXIDOREDUCTASE (EUROFUNG)"/>
    <property type="match status" value="1"/>
</dbReference>
<dbReference type="PANTHER" id="PTHR45348:SF6">
    <property type="entry name" value="TRANS-ENOYL REDUCTASE APDC"/>
    <property type="match status" value="1"/>
</dbReference>
<dbReference type="Pfam" id="PF08240">
    <property type="entry name" value="ADH_N"/>
    <property type="match status" value="1"/>
</dbReference>
<dbReference type="SMART" id="SM00829">
    <property type="entry name" value="PKS_ER"/>
    <property type="match status" value="1"/>
</dbReference>
<dbReference type="SUPFAM" id="SSF50129">
    <property type="entry name" value="GroES-like"/>
    <property type="match status" value="1"/>
</dbReference>
<dbReference type="SUPFAM" id="SSF51735">
    <property type="entry name" value="NAD(P)-binding Rossmann-fold domains"/>
    <property type="match status" value="1"/>
</dbReference>